<reference key="1">
    <citation type="journal article" date="2002" name="J. Virol.">
        <title>Characterization of an enteropathogenic bovine calicivirus representing a potentially new calicivirus genus.</title>
        <authorList>
            <person name="Smiley J.R."/>
            <person name="Chang K.O."/>
            <person name="Hayes J."/>
            <person name="Vinje J."/>
            <person name="Saif L.J."/>
        </authorList>
    </citation>
    <scope>NUCLEOTIDE SEQUENCE [GENOMIC RNA]</scope>
</reference>
<organism>
    <name type="scientific">Bovine enteric calicivirus NB (isolate Bovine/United States/N ebraska/1980)</name>
    <name type="common">BEC-NB</name>
    <dbReference type="NCBI Taxonomy" id="2847999"/>
    <lineage>
        <taxon>Viruses</taxon>
        <taxon>Riboviria</taxon>
        <taxon>Orthornavirae</taxon>
        <taxon>Pisuviricota</taxon>
        <taxon>Pisoniviricetes</taxon>
        <taxon>Picornavirales</taxon>
        <taxon>Caliciviridae</taxon>
        <taxon>Nebovirus</taxon>
        <taxon>Newbury 1 virus</taxon>
    </lineage>
</organism>
<comment type="function">
    <molecule>NTPase</molecule>
    <text evidence="4 5 6">Displays NTPase activity, but no helicase activity (By similarity). Induces the formation of convoluted membranes derived from the host ER (By similarity). These remodeled membranes probably form the viral factories that contain the replication complex (By similarity). Together with NS2 and NS4, initiates the formation of the replication complex (By similarity).</text>
</comment>
<comment type="function">
    <molecule>Viral genome-linked protein</molecule>
    <text evidence="2">Viral genome-linked protein is covalently linked to the 5'-end of the positive-strand, negative-strand genomic RNAs and subgenomic RNA. Acts as a genome-linked replication primer. May recruit ribosome to viral RNA thereby promoting viral proteins translation. Interacts with host translation initiation complex to allow the translation of viral proteins.</text>
</comment>
<comment type="function">
    <molecule>3C-like protease</molecule>
    <text evidence="9">Processes the polyprotein. 3CLpro-RdRp is first released by autocleavage, then all other proteins are cleaved. May cleave polyadenylate-binding protein thereby inhibiting cellular translation.</text>
</comment>
<comment type="function">
    <molecule>RNA-directed RNA polymerase</molecule>
    <text evidence="7">Replicates genomic and antigenomic RNA by recognizing replications specific signals. Also transcribes a subgenomic mRNA by initiating RNA synthesis internally on antigenomic RNA. This sgRNA codes for structural proteins. Catalyzes the covalent attachment VPg with viral RNAs (By similarity).</text>
</comment>
<comment type="function">
    <molecule>Capsid protein</molecule>
    <text evidence="1 7">Capsid protein self assembles to form an icosahedral capsid with a T=3 symmetry, about 35 nm in diameter, and consisting of 180 capsid proteins. A smaller form of capsid with a diameter of 23 nm might be capsid proteins assembled as icosahedron with T=1 symmetry. The capsid encapsulate VP2 proteins and genomic or subgenomic RNA. Attaches virion to target cells by binding histo-blood group antigens, inducing endocytosis of the viral particle (By similarity). Acidification of the endosome induces conformational change of capsid protein thereby injecting virus genomic RNA into host cytoplasm (By similarity).</text>
</comment>
<comment type="catalytic activity">
    <molecule>NTPase</molecule>
    <reaction evidence="5">
        <text>a ribonucleoside 5'-triphosphate + H2O = a ribonucleoside 5'-diphosphate + phosphate + H(+)</text>
        <dbReference type="Rhea" id="RHEA:23680"/>
        <dbReference type="ChEBI" id="CHEBI:15377"/>
        <dbReference type="ChEBI" id="CHEBI:15378"/>
        <dbReference type="ChEBI" id="CHEBI:43474"/>
        <dbReference type="ChEBI" id="CHEBI:57930"/>
        <dbReference type="ChEBI" id="CHEBI:61557"/>
        <dbReference type="EC" id="3.6.1.15"/>
    </reaction>
</comment>
<comment type="catalytic activity">
    <molecule>3C-like protease</molecule>
    <reaction evidence="11">
        <text>Endopeptidase with a preference for cleavage when the P1 position is occupied by Glu-|-Xaa and the P1' position is occupied by Gly-|-Yaa.</text>
        <dbReference type="EC" id="3.4.22.66"/>
    </reaction>
</comment>
<comment type="catalytic activity">
    <molecule>RNA-directed RNA polymerase</molecule>
    <reaction evidence="9">
        <text>RNA(n) + a ribonucleoside 5'-triphosphate = RNA(n+1) + diphosphate</text>
        <dbReference type="Rhea" id="RHEA:21248"/>
        <dbReference type="Rhea" id="RHEA-COMP:14527"/>
        <dbReference type="Rhea" id="RHEA-COMP:17342"/>
        <dbReference type="ChEBI" id="CHEBI:33019"/>
        <dbReference type="ChEBI" id="CHEBI:61557"/>
        <dbReference type="ChEBI" id="CHEBI:140395"/>
        <dbReference type="EC" id="2.7.7.48"/>
    </reaction>
</comment>
<comment type="subcellular location">
    <molecule>Capsid protein</molecule>
    <subcellularLocation>
        <location>Virion</location>
    </subcellularLocation>
    <subcellularLocation>
        <location evidence="13">Host cytoplasm</location>
    </subcellularLocation>
</comment>
<comment type="PTM">
    <molecule>Genome polyprotein</molecule>
    <text evidence="3">Specific enzymatic cleavages by its own cysteine protease yield mature proteins (By similarity). The protease cleaves itself from the nascent polyprotein autocatalytically. Precursor p41 can be cleaved by viral 3CLpro into protein p19 and VPg, or cleaved by host protease into protein p23/2 and protein p18 (By similarity).</text>
</comment>
<comment type="PTM">
    <molecule>Viral genome-linked protein</molecule>
    <text evidence="6">VPg is uridylylated by the polymerase and is covalently attached to the 5'-end of the polyadenylated genomic and subgenomic RNAs. This uridylylated form acts as a nucleotide-peptide primer for the polymerase.</text>
</comment>
<accession>Q8JN60</accession>
<evidence type="ECO:0000250" key="1"/>
<evidence type="ECO:0000250" key="2">
    <source>
        <dbReference type="UniProtKB" id="P27409"/>
    </source>
</evidence>
<evidence type="ECO:0000250" key="3">
    <source>
        <dbReference type="UniProtKB" id="P27410"/>
    </source>
</evidence>
<evidence type="ECO:0000250" key="4">
    <source>
        <dbReference type="UniProtKB" id="P54634"/>
    </source>
</evidence>
<evidence type="ECO:0000250" key="5">
    <source>
        <dbReference type="UniProtKB" id="Q04544"/>
    </source>
</evidence>
<evidence type="ECO:0000250" key="6">
    <source>
        <dbReference type="UniProtKB" id="Q66914"/>
    </source>
</evidence>
<evidence type="ECO:0000250" key="7">
    <source>
        <dbReference type="UniProtKB" id="Q86119"/>
    </source>
</evidence>
<evidence type="ECO:0000255" key="8"/>
<evidence type="ECO:0000255" key="9">
    <source>
        <dbReference type="PROSITE-ProRule" id="PRU00539"/>
    </source>
</evidence>
<evidence type="ECO:0000255" key="10">
    <source>
        <dbReference type="PROSITE-ProRule" id="PRU00551"/>
    </source>
</evidence>
<evidence type="ECO:0000255" key="11">
    <source>
        <dbReference type="PROSITE-ProRule" id="PRU01242"/>
    </source>
</evidence>
<evidence type="ECO:0000256" key="12">
    <source>
        <dbReference type="SAM" id="MobiDB-lite"/>
    </source>
</evidence>
<evidence type="ECO:0000305" key="13"/>
<feature type="chain" id="PRO_0000341628" description="Genome polyprotein">
    <location>
        <begin position="1"/>
        <end position="2210"/>
    </location>
</feature>
<feature type="chain" id="PRO_0000341629" description="Protein p34">
    <location>
        <begin position="1"/>
        <end position="302"/>
    </location>
</feature>
<feature type="chain" id="PRO_0000341630" description="NTPase">
    <location>
        <begin position="303"/>
        <end position="645"/>
    </location>
</feature>
<feature type="chain" id="PRO_0000341631" description="Protein p30">
    <location>
        <begin position="646"/>
        <end position="925"/>
    </location>
</feature>
<feature type="chain" id="PRO_0000341632" description="Viral genome-linked protein">
    <location>
        <begin position="926"/>
        <end position="990"/>
    </location>
</feature>
<feature type="chain" id="PRO_0000341633" description="3C-like protease">
    <location>
        <begin position="991"/>
        <end position="1174"/>
    </location>
</feature>
<feature type="chain" id="PRO_0000341634" description="RNA-directed RNA polymerase">
    <location>
        <begin position="1175"/>
        <end position="1659"/>
    </location>
</feature>
<feature type="chain" id="PRO_0000341635" description="Capsid protein">
    <location>
        <begin position="1660"/>
        <end position="2210"/>
    </location>
</feature>
<feature type="domain" description="SF3 helicase" evidence="10">
    <location>
        <begin position="426"/>
        <end position="585"/>
    </location>
</feature>
<feature type="domain" description="Peptidase C24" evidence="11">
    <location>
        <begin position="991"/>
        <end position="1136"/>
    </location>
</feature>
<feature type="domain" description="RdRp catalytic" evidence="9">
    <location>
        <begin position="1379"/>
        <end position="1501"/>
    </location>
</feature>
<feature type="region of interest" description="Disordered" evidence="12">
    <location>
        <begin position="1"/>
        <end position="24"/>
    </location>
</feature>
<feature type="region of interest" description="Disordered" evidence="12">
    <location>
        <begin position="1656"/>
        <end position="1685"/>
    </location>
</feature>
<feature type="compositionally biased region" description="Basic residues" evidence="12">
    <location>
        <begin position="13"/>
        <end position="22"/>
    </location>
</feature>
<feature type="active site" description="For 3CLpro activity" evidence="11">
    <location>
        <position position="1025"/>
    </location>
</feature>
<feature type="active site" description="For 3CLpro activity" evidence="11">
    <location>
        <position position="1039"/>
    </location>
</feature>
<feature type="active site" description="For 3CLpro activity" evidence="11">
    <location>
        <position position="1103"/>
    </location>
</feature>
<feature type="binding site" evidence="10">
    <location>
        <begin position="456"/>
        <end position="463"/>
    </location>
    <ligand>
        <name>ATP</name>
        <dbReference type="ChEBI" id="CHEBI:30616"/>
    </ligand>
</feature>
<feature type="site" description="Cleavage; by 3CLpro" evidence="8">
    <location>
        <begin position="302"/>
        <end position="303"/>
    </location>
</feature>
<feature type="site" description="Cleavage; by 3CLpro" evidence="8">
    <location>
        <begin position="645"/>
        <end position="646"/>
    </location>
</feature>
<feature type="site" description="Cleavage; by 3CLpro" evidence="8">
    <location>
        <begin position="925"/>
        <end position="926"/>
    </location>
</feature>
<feature type="site" description="Cleavage; by 3CLpro" evidence="8">
    <location>
        <begin position="990"/>
        <end position="991"/>
    </location>
</feature>
<feature type="site" description="Cleavage; by 3CLpro" evidence="8">
    <location>
        <begin position="1174"/>
        <end position="1175"/>
    </location>
</feature>
<feature type="site" description="Cleavage; by 3CLpro" evidence="8">
    <location>
        <begin position="1659"/>
        <end position="1660"/>
    </location>
</feature>
<feature type="modified residue" description="O-(5'-phospho-RNA)-tyrosine" evidence="3">
    <location>
        <position position="940"/>
    </location>
</feature>
<keyword id="KW-0067">ATP-binding</keyword>
<keyword id="KW-0167">Capsid protein</keyword>
<keyword id="KW-0191">Covalent protein-RNA linkage</keyword>
<keyword id="KW-0347">Helicase</keyword>
<keyword id="KW-1035">Host cytoplasm</keyword>
<keyword id="KW-0378">Hydrolase</keyword>
<keyword id="KW-0547">Nucleotide-binding</keyword>
<keyword id="KW-0548">Nucleotidyltransferase</keyword>
<keyword id="KW-0597">Phosphoprotein</keyword>
<keyword id="KW-0645">Protease</keyword>
<keyword id="KW-0696">RNA-directed RNA polymerase</keyword>
<keyword id="KW-0788">Thiol protease</keyword>
<keyword id="KW-0808">Transferase</keyword>
<keyword id="KW-0693">Viral RNA replication</keyword>
<keyword id="KW-0946">Virion</keyword>
<organismHost>
    <name type="scientific">Bos taurus</name>
    <name type="common">Bovine</name>
    <dbReference type="NCBI Taxonomy" id="9913"/>
</organismHost>
<name>POLG_BECNB</name>
<proteinExistence type="inferred from homology"/>
<sequence length="2210" mass="238639">MAPVVSRDQCKPKTPKPHRPAPPHRCTTRCPEDCGWYVGRCSCPNVCQREGWDDFFVADKVKPPSYVASKTSVADVVDWLLEEDPATDGPSEFDLTQFFQAYTDKSHQIHRDYAPDQLAQALDMAYILSVDPPDIKLPEYEATRFTHDTSYKGKLPKWLRVYGIKSRELAKKAVTNIRGGAHWAKGLFKQMWDSLPGWSEVEAYFKAFFAGIITGVEDALSKSPSSVWTSLKLTPLLYIWRNINECSDIAVILGAFWATLELYNIPSKVYDLVSTALGPMVQELARKVINVVKGDGSGPKQEGGRPSFSIPGVLLATFLSAIILGSMPSDGLIKKILRGCATAAGLVGGFNAVKSIITTVQGASACKDVKKLASQLMCVTTMAATVSTRGERQVLASMLNDLNESVRERLVDPAYASLVPQLSAMSNKIVELSTMNASALSAARKRTPAKIIVLCGPPGHGKSVAAHKLAKMLNPNEPSIWNPFSDHHDEYTAEEVMVIDETPAEPGQWIEDLIAMGSNSPFVPNYDRVENKTRCFDSKYVIITTNHNPLINPTHTRAAALARRLTLVYVNSPDVADFLRQHPGVPPPATLFKADCSHLHFDIHPYNSIGTTAIVGHNGTTPVPRAKRVSLEGLCKHVKEMPDREGPPDGVPERMVLVAPDKGTARFVEAVINTYHNSGLVAQPAAWDTTPQPYQLAVTWQGSNSTVTGQRWDCNPQTPFVAPHFTRNMFKRVLGTEVPEYHLLAYACRITSSSLGDKSLPVPNPTVVINDPSPTRLALALMRHLKNPIASGLRVVWDLFRGCATGPKRLFTWALSQEWNPMPVTTAFTFPAGTVILHTAGGVRVVVLPPGPQFGLTEVARLADHSGQDDPVVPDMFGATWTELLWRLLKVIGTFLANYGVAIAGLTLSIAAFKTANKSAKNDRQGWLSGSGVALSDEEYDEWMKYSKKKGKKINADEFLQLRHRAAMGNDDDDARDYRSFYTAYQLGREGNNCDDIPLHPAVGPTTGGGYYVHIGNGVGVTLKHVASGEDVIKELGNDLVKIRTKHHKVGDPAMVVGDGMPVKFVTGHLVVDTRSESVVFDQTRLNVIRVKVPGLETRRGYCGLPYVNSAGQVVGLHQGSYGVGDKVITPITPEPTAPPDTIMWRGLECARSDIVTHLPHGTKYSVSPGMKEEATKCSHQPAPLGRNDPRCGQTQVAMVVKALSPYTGSPAVEKLDGCLVAAISEVRTAIQSLTPKGGFRPLTFAAAWQSLDLSTSAGALAPGKTKRDLCDPDTGMPTGKYKEELLRAWSRAGTGTALDHTYIVALKDELRPVEKVAEGKRRLIWGADARVALIASAALSPIANALKTVTNLLPVQVGVDPSSASCVSAWVNRLNRHDHCLELDYSKWDSTMSPVLINIAIDILCNTCASDGLRVAVCQTLKTRPTALVEGVAVPTKSGLPSGMPFTSQINSIVHWILWSATVRKCSLPLNIGSVNELAPFLTYGDDGLYTIPSHLTKSIDEIVSTLKGYGLSPTAPDKGMNIEIKKTSFTYMSGPVFLKRRIVLTPGGHRALLDLTSLARQPVWVNGPRRSVWDHEAQPIEIDSEVRTIQLQNVLIESAWHQPQDFNQVAALVYKSAEASGITIPRYSLEEARAIYDGRFYGIQHVSMPCNSDLIREGNMSDNKSIPEQQHESSRAMDAGATGAAAAAPAPPVAAAPASGLVGALVAEPQSGPSTEQWRTAYTLFGTVSWNANAGPGTILTVGRLGPGMNPYTQHIAAMYGGWAGGMDIRITIAGSGFIGGTLAVAAIPPGVDPESVNVLRMPHVLIDARGGVPLEVTLEDIRTSLYHPMGDANTASLVIAVMTGLINPLGTDTLSVTVQLETRPGRDWVFFSLLPPTAGVASADPSQLLTRVALATSPEVRFGTGVLGILGLPSNPSVNRVYDVQSRTRGWSFPIPSSSVFMGDARNVEHTRRVMVQSSAPNNPLSDVFPDGFPDFIPQSDTEPDGGAVIAGQVLPHPGDNDNFWRLTPVVRGNTTAAINTIPERFNQVYFINLADEEAVSAATEELRFNGIQGIFGQRTTARAVQVMQGYVPRAEHIIRPAGFAGVGPQGPNVPIGFAGTMPNFNATASGADDLVPVWGPTLVHTASLLAGTTYELAENSMYVFSVSTSTSTFELGMLANGTWLGPAQLAGTGITWTEVLSVTYMGMRFAYNPLSGQGIGGESRRL</sequence>
<dbReference type="EC" id="3.6.1.15" evidence="5"/>
<dbReference type="EC" id="3.4.22.66"/>
<dbReference type="EC" id="2.7.7.48"/>
<dbReference type="EMBL" id="AY082891">
    <property type="protein sequence ID" value="AAL99277.1"/>
    <property type="molecule type" value="Genomic_RNA"/>
</dbReference>
<dbReference type="RefSeq" id="NP_663315.1">
    <property type="nucleotide sequence ID" value="NC_004064.1"/>
</dbReference>
<dbReference type="SMR" id="Q8JN60"/>
<dbReference type="KEGG" id="vg:951161"/>
<dbReference type="Proteomes" id="UP000008174">
    <property type="component" value="Genome"/>
</dbReference>
<dbReference type="GO" id="GO:0030430">
    <property type="term" value="C:host cell cytoplasm"/>
    <property type="evidence" value="ECO:0007669"/>
    <property type="project" value="UniProtKB-SubCell"/>
</dbReference>
<dbReference type="GO" id="GO:0019028">
    <property type="term" value="C:viral capsid"/>
    <property type="evidence" value="ECO:0007669"/>
    <property type="project" value="UniProtKB-KW"/>
</dbReference>
<dbReference type="GO" id="GO:0005524">
    <property type="term" value="F:ATP binding"/>
    <property type="evidence" value="ECO:0007669"/>
    <property type="project" value="UniProtKB-KW"/>
</dbReference>
<dbReference type="GO" id="GO:0004197">
    <property type="term" value="F:cysteine-type endopeptidase activity"/>
    <property type="evidence" value="ECO:0007669"/>
    <property type="project" value="InterPro"/>
</dbReference>
<dbReference type="GO" id="GO:0017111">
    <property type="term" value="F:ribonucleoside triphosphate phosphatase activity"/>
    <property type="evidence" value="ECO:0007669"/>
    <property type="project" value="UniProtKB-EC"/>
</dbReference>
<dbReference type="GO" id="GO:0003723">
    <property type="term" value="F:RNA binding"/>
    <property type="evidence" value="ECO:0007669"/>
    <property type="project" value="InterPro"/>
</dbReference>
<dbReference type="GO" id="GO:0003724">
    <property type="term" value="F:RNA helicase activity"/>
    <property type="evidence" value="ECO:0007669"/>
    <property type="project" value="InterPro"/>
</dbReference>
<dbReference type="GO" id="GO:0003968">
    <property type="term" value="F:RNA-directed RNA polymerase activity"/>
    <property type="evidence" value="ECO:0007669"/>
    <property type="project" value="UniProtKB-KW"/>
</dbReference>
<dbReference type="GO" id="GO:0006351">
    <property type="term" value="P:DNA-templated transcription"/>
    <property type="evidence" value="ECO:0007669"/>
    <property type="project" value="InterPro"/>
</dbReference>
<dbReference type="GO" id="GO:0006508">
    <property type="term" value="P:proteolysis"/>
    <property type="evidence" value="ECO:0007669"/>
    <property type="project" value="UniProtKB-KW"/>
</dbReference>
<dbReference type="GO" id="GO:0039694">
    <property type="term" value="P:viral RNA genome replication"/>
    <property type="evidence" value="ECO:0007669"/>
    <property type="project" value="InterPro"/>
</dbReference>
<dbReference type="CDD" id="cd23192">
    <property type="entry name" value="Caliciviridae_RdRp"/>
    <property type="match status" value="1"/>
</dbReference>
<dbReference type="Gene3D" id="1.10.260.110">
    <property type="match status" value="1"/>
</dbReference>
<dbReference type="Gene3D" id="1.20.960.20">
    <property type="match status" value="1"/>
</dbReference>
<dbReference type="Gene3D" id="2.60.120.20">
    <property type="match status" value="1"/>
</dbReference>
<dbReference type="Gene3D" id="3.30.70.270">
    <property type="match status" value="1"/>
</dbReference>
<dbReference type="Gene3D" id="6.10.140.320">
    <property type="match status" value="1"/>
</dbReference>
<dbReference type="Gene3D" id="6.10.250.3230">
    <property type="match status" value="1"/>
</dbReference>
<dbReference type="Gene3D" id="3.40.50.300">
    <property type="entry name" value="P-loop containing nucleotide triphosphate hydrolases"/>
    <property type="match status" value="1"/>
</dbReference>
<dbReference type="InterPro" id="IPR004005">
    <property type="entry name" value="Calicivirus_coat"/>
</dbReference>
<dbReference type="InterPro" id="IPR043502">
    <property type="entry name" value="DNA/RNA_pol_sf"/>
</dbReference>
<dbReference type="InterPro" id="IPR004004">
    <property type="entry name" value="Helic/Pol/Pept_Calicivir-typ"/>
</dbReference>
<dbReference type="InterPro" id="IPR000605">
    <property type="entry name" value="Helicase_SF3_ssDNA/RNA_vir"/>
</dbReference>
<dbReference type="InterPro" id="IPR014759">
    <property type="entry name" value="Helicase_SF3_ssRNA_vir"/>
</dbReference>
<dbReference type="InterPro" id="IPR027417">
    <property type="entry name" value="P-loop_NTPase"/>
</dbReference>
<dbReference type="InterPro" id="IPR000317">
    <property type="entry name" value="Peptidase_C24"/>
</dbReference>
<dbReference type="InterPro" id="IPR009003">
    <property type="entry name" value="Peptidase_S1_PA"/>
</dbReference>
<dbReference type="InterPro" id="IPR043128">
    <property type="entry name" value="Rev_trsase/Diguanyl_cyclase"/>
</dbReference>
<dbReference type="InterPro" id="IPR001205">
    <property type="entry name" value="RNA-dir_pol_C"/>
</dbReference>
<dbReference type="InterPro" id="IPR007094">
    <property type="entry name" value="RNA-dir_pol_PSvirus"/>
</dbReference>
<dbReference type="InterPro" id="IPR029053">
    <property type="entry name" value="Viral_coat"/>
</dbReference>
<dbReference type="InterPro" id="IPR049434">
    <property type="entry name" value="VPg"/>
</dbReference>
<dbReference type="Pfam" id="PF00915">
    <property type="entry name" value="Calici_coat"/>
    <property type="match status" value="1"/>
</dbReference>
<dbReference type="Pfam" id="PF03510">
    <property type="entry name" value="Peptidase_C24"/>
    <property type="match status" value="1"/>
</dbReference>
<dbReference type="Pfam" id="PF00680">
    <property type="entry name" value="RdRP_1"/>
    <property type="match status" value="1"/>
</dbReference>
<dbReference type="Pfam" id="PF00910">
    <property type="entry name" value="RNA_helicase"/>
    <property type="match status" value="1"/>
</dbReference>
<dbReference type="Pfam" id="PF20915">
    <property type="entry name" value="VPg"/>
    <property type="match status" value="1"/>
</dbReference>
<dbReference type="PRINTS" id="PR00916">
    <property type="entry name" value="2CENDOPTASE"/>
</dbReference>
<dbReference type="PRINTS" id="PR00918">
    <property type="entry name" value="CALICVIRUSNS"/>
</dbReference>
<dbReference type="SUPFAM" id="SSF56672">
    <property type="entry name" value="DNA/RNA polymerases"/>
    <property type="match status" value="1"/>
</dbReference>
<dbReference type="SUPFAM" id="SSF52540">
    <property type="entry name" value="P-loop containing nucleoside triphosphate hydrolases"/>
    <property type="match status" value="1"/>
</dbReference>
<dbReference type="SUPFAM" id="SSF88633">
    <property type="entry name" value="Positive stranded ssRNA viruses"/>
    <property type="match status" value="1"/>
</dbReference>
<dbReference type="SUPFAM" id="SSF50494">
    <property type="entry name" value="Trypsin-like serine proteases"/>
    <property type="match status" value="1"/>
</dbReference>
<dbReference type="PROSITE" id="PS51894">
    <property type="entry name" value="CV_3CL_PRO"/>
    <property type="match status" value="1"/>
</dbReference>
<dbReference type="PROSITE" id="PS50507">
    <property type="entry name" value="RDRP_SSRNA_POS"/>
    <property type="match status" value="1"/>
</dbReference>
<dbReference type="PROSITE" id="PS51218">
    <property type="entry name" value="SF3_HELICASE_2"/>
    <property type="match status" value="1"/>
</dbReference>
<protein>
    <recommendedName>
        <fullName>Genome polyprotein</fullName>
    </recommendedName>
    <component>
        <recommendedName>
            <fullName>Protein p34</fullName>
        </recommendedName>
    </component>
    <component>
        <recommendedName>
            <fullName>NTPase</fullName>
            <ecNumber evidence="5">3.6.1.15</ecNumber>
        </recommendedName>
        <alternativeName>
            <fullName>p37</fullName>
        </alternativeName>
    </component>
    <component>
        <recommendedName>
            <fullName>Protein p30</fullName>
        </recommendedName>
    </component>
    <component>
        <recommendedName>
            <fullName>Viral genome-linked protein</fullName>
        </recommendedName>
        <alternativeName>
            <fullName>VPg</fullName>
        </alternativeName>
        <alternativeName>
            <fullName>p8</fullName>
        </alternativeName>
    </component>
    <component>
        <recommendedName>
            <fullName>3C-like protease</fullName>
            <shortName>3CLpro</shortName>
            <ecNumber>3.4.22.66</ecNumber>
        </recommendedName>
        <alternativeName>
            <fullName>p20</fullName>
        </alternativeName>
    </component>
    <component>
        <recommendedName>
            <fullName>RNA-directed RNA polymerase</fullName>
            <shortName>RdRp</shortName>
            <ecNumber>2.7.7.48</ecNumber>
        </recommendedName>
        <alternativeName>
            <fullName>p53</fullName>
        </alternativeName>
    </component>
    <component>
        <recommendedName>
            <fullName>Capsid protein</fullName>
        </recommendedName>
        <alternativeName>
            <fullName>VP1</fullName>
        </alternativeName>
    </component>
</protein>
<gene>
    <name type="ORF">ORF1</name>
</gene>